<keyword id="KW-0050">Antiport</keyword>
<keyword id="KW-0997">Cell inner membrane</keyword>
<keyword id="KW-1003">Cell membrane</keyword>
<keyword id="KW-0406">Ion transport</keyword>
<keyword id="KW-0472">Membrane</keyword>
<keyword id="KW-1185">Reference proteome</keyword>
<keyword id="KW-0915">Sodium</keyword>
<keyword id="KW-0739">Sodium transport</keyword>
<keyword id="KW-0812">Transmembrane</keyword>
<keyword id="KW-1133">Transmembrane helix</keyword>
<keyword id="KW-0813">Transport</keyword>
<dbReference type="EMBL" id="BX571660">
    <property type="protein sequence ID" value="CAE10330.1"/>
    <property type="molecule type" value="Genomic_DNA"/>
</dbReference>
<dbReference type="RefSeq" id="WP_011139117.1">
    <property type="nucleotide sequence ID" value="NC_005090.1"/>
</dbReference>
<dbReference type="SMR" id="Q7M922"/>
<dbReference type="STRING" id="273121.WS1251"/>
<dbReference type="KEGG" id="wsu:WS1251"/>
<dbReference type="eggNOG" id="COG3004">
    <property type="taxonomic scope" value="Bacteria"/>
</dbReference>
<dbReference type="HOGENOM" id="CLU_015803_1_2_7"/>
<dbReference type="Proteomes" id="UP000000422">
    <property type="component" value="Chromosome"/>
</dbReference>
<dbReference type="GO" id="GO:0005886">
    <property type="term" value="C:plasma membrane"/>
    <property type="evidence" value="ECO:0007669"/>
    <property type="project" value="UniProtKB-SubCell"/>
</dbReference>
<dbReference type="GO" id="GO:0015385">
    <property type="term" value="F:sodium:proton antiporter activity"/>
    <property type="evidence" value="ECO:0007669"/>
    <property type="project" value="TreeGrafter"/>
</dbReference>
<dbReference type="GO" id="GO:0006885">
    <property type="term" value="P:regulation of pH"/>
    <property type="evidence" value="ECO:0007669"/>
    <property type="project" value="InterPro"/>
</dbReference>
<dbReference type="Gene3D" id="1.20.1530.10">
    <property type="entry name" value="Na+/H+ antiporter like domain"/>
    <property type="match status" value="1"/>
</dbReference>
<dbReference type="HAMAP" id="MF_01844">
    <property type="entry name" value="NhaA"/>
    <property type="match status" value="1"/>
</dbReference>
<dbReference type="InterPro" id="IPR023171">
    <property type="entry name" value="Na/H_antiporter_dom_sf"/>
</dbReference>
<dbReference type="InterPro" id="IPR004670">
    <property type="entry name" value="NhaA"/>
</dbReference>
<dbReference type="NCBIfam" id="TIGR00773">
    <property type="entry name" value="NhaA"/>
    <property type="match status" value="1"/>
</dbReference>
<dbReference type="NCBIfam" id="NF011428">
    <property type="entry name" value="PRK14856.1"/>
    <property type="match status" value="1"/>
</dbReference>
<dbReference type="PANTHER" id="PTHR30341:SF0">
    <property type="entry name" value="NA(+)_H(+) ANTIPORTER NHAA"/>
    <property type="match status" value="1"/>
</dbReference>
<dbReference type="PANTHER" id="PTHR30341">
    <property type="entry name" value="SODIUM ION/PROTON ANTIPORTER NHAA-RELATED"/>
    <property type="match status" value="1"/>
</dbReference>
<dbReference type="Pfam" id="PF06965">
    <property type="entry name" value="Na_H_antiport_1"/>
    <property type="match status" value="1"/>
</dbReference>
<gene>
    <name evidence="1" type="primary">nhaA</name>
    <name type="ordered locus">WS1251</name>
</gene>
<comment type="function">
    <text evidence="1">Na(+)/H(+) antiporter that extrudes sodium in exchange for external protons.</text>
</comment>
<comment type="catalytic activity">
    <reaction evidence="1">
        <text>Na(+)(in) + 2 H(+)(out) = Na(+)(out) + 2 H(+)(in)</text>
        <dbReference type="Rhea" id="RHEA:29251"/>
        <dbReference type="ChEBI" id="CHEBI:15378"/>
        <dbReference type="ChEBI" id="CHEBI:29101"/>
    </reaction>
    <physiologicalReaction direction="left-to-right" evidence="1">
        <dbReference type="Rhea" id="RHEA:29252"/>
    </physiologicalReaction>
</comment>
<comment type="subcellular location">
    <subcellularLocation>
        <location evidence="1">Cell inner membrane</location>
        <topology evidence="1">Multi-pass membrane protein</topology>
    </subcellularLocation>
</comment>
<comment type="similarity">
    <text evidence="1">Belongs to the NhaA Na(+)/H(+) (TC 2.A.33) antiporter family.</text>
</comment>
<name>NHAA_WOLSU</name>
<reference key="1">
    <citation type="journal article" date="2003" name="Proc. Natl. Acad. Sci. U.S.A.">
        <title>Complete genome sequence and analysis of Wolinella succinogenes.</title>
        <authorList>
            <person name="Baar C."/>
            <person name="Eppinger M."/>
            <person name="Raddatz G."/>
            <person name="Simon J."/>
            <person name="Lanz C."/>
            <person name="Klimmek O."/>
            <person name="Nandakumar R."/>
            <person name="Gross R."/>
            <person name="Rosinus A."/>
            <person name="Keller H."/>
            <person name="Jagtap P."/>
            <person name="Linke B."/>
            <person name="Meyer F."/>
            <person name="Lederer H."/>
            <person name="Schuster S.C."/>
        </authorList>
    </citation>
    <scope>NUCLEOTIDE SEQUENCE [LARGE SCALE GENOMIC DNA]</scope>
    <source>
        <strain>ATCC 29543 / DSM 1740 / CCUG 13145 / JCM 31913 / LMG 7466 / NCTC 11488 / FDC 602W</strain>
    </source>
</reference>
<organism>
    <name type="scientific">Wolinella succinogenes (strain ATCC 29543 / DSM 1740 / CCUG 13145 / JCM 31913 / LMG 7466 / NCTC 11488 / FDC 602W)</name>
    <name type="common">Vibrio succinogenes</name>
    <dbReference type="NCBI Taxonomy" id="273121"/>
    <lineage>
        <taxon>Bacteria</taxon>
        <taxon>Pseudomonadati</taxon>
        <taxon>Campylobacterota</taxon>
        <taxon>Epsilonproteobacteria</taxon>
        <taxon>Campylobacterales</taxon>
        <taxon>Helicobacteraceae</taxon>
        <taxon>Wolinella</taxon>
    </lineage>
</organism>
<accession>Q7M922</accession>
<protein>
    <recommendedName>
        <fullName evidence="1">Na(+)/H(+) antiporter NhaA</fullName>
    </recommendedName>
    <alternativeName>
        <fullName evidence="1">Sodium/proton antiporter NhaA</fullName>
    </alternativeName>
</protein>
<evidence type="ECO:0000255" key="1">
    <source>
        <dbReference type="HAMAP-Rule" id="MF_01844"/>
    </source>
</evidence>
<sequence length="452" mass="49013">MAENQDYASGNGGIKALLLNFIHSQSFSGIFLFFCAVVAMISANSALSESYFHLWHTEIGFFIGETFIGMSLHHWINDVLMSFFFLMVGLEIKRELLFGELAGIKRAAFPAIAALGGMIVPAIVYTLFNFGTDSAHGFGIPMATDIAFALGVLLLLGDKVSLALKVFLVSLAVVDDLGAVVVIAIFYTEDLQTLWLLYSVVILGLLIGLNKMGVRSLFPYAILGVLLWITVHNCGIHATIAAVALAFTIPVKPKIESENFAQEAKELLERFLSHDKERANLLLASEQVHSVELLSKHSKSVQSPLVRLEHALHPWSAYFIMPVFAFANAGVAISSNIHFDIDGVLPGIMLGLIVGKPVGILGLTYLAEKMGIATRPEGVMWIDILGAGMLAGIGFTMSIFITNLAFTNPEATDVAKIAILSASLFAGALGYFFISIRCRFKKKKEACCTIKS</sequence>
<feature type="chain" id="PRO_0000334465" description="Na(+)/H(+) antiporter NhaA">
    <location>
        <begin position="1"/>
        <end position="452"/>
    </location>
</feature>
<feature type="transmembrane region" description="Helical" evidence="1">
    <location>
        <begin position="27"/>
        <end position="47"/>
    </location>
</feature>
<feature type="transmembrane region" description="Helical" evidence="1">
    <location>
        <begin position="67"/>
        <end position="87"/>
    </location>
</feature>
<feature type="transmembrane region" description="Helical" evidence="1">
    <location>
        <begin position="108"/>
        <end position="128"/>
    </location>
</feature>
<feature type="transmembrane region" description="Helical" evidence="1">
    <location>
        <begin position="137"/>
        <end position="157"/>
    </location>
</feature>
<feature type="transmembrane region" description="Helical" evidence="1">
    <location>
        <begin position="166"/>
        <end position="186"/>
    </location>
</feature>
<feature type="transmembrane region" description="Helical" evidence="1">
    <location>
        <begin position="194"/>
        <end position="214"/>
    </location>
</feature>
<feature type="transmembrane region" description="Helical" evidence="1">
    <location>
        <begin position="216"/>
        <end position="236"/>
    </location>
</feature>
<feature type="transmembrane region" description="Helical" evidence="1">
    <location>
        <begin position="314"/>
        <end position="334"/>
    </location>
</feature>
<feature type="transmembrane region" description="Helical" evidence="1">
    <location>
        <begin position="343"/>
        <end position="363"/>
    </location>
</feature>
<feature type="transmembrane region" description="Helical" evidence="1">
    <location>
        <begin position="381"/>
        <end position="401"/>
    </location>
</feature>
<feature type="transmembrane region" description="Helical" evidence="1">
    <location>
        <begin position="414"/>
        <end position="434"/>
    </location>
</feature>
<proteinExistence type="inferred from homology"/>